<gene>
    <name type="ordered locus">Spea_1772</name>
</gene>
<organism>
    <name type="scientific">Shewanella pealeana (strain ATCC 700345 / ANG-SQ1)</name>
    <dbReference type="NCBI Taxonomy" id="398579"/>
    <lineage>
        <taxon>Bacteria</taxon>
        <taxon>Pseudomonadati</taxon>
        <taxon>Pseudomonadota</taxon>
        <taxon>Gammaproteobacteria</taxon>
        <taxon>Alteromonadales</taxon>
        <taxon>Shewanellaceae</taxon>
        <taxon>Shewanella</taxon>
    </lineage>
</organism>
<reference key="1">
    <citation type="submission" date="2007-10" db="EMBL/GenBank/DDBJ databases">
        <title>Complete sequence of Shewanella pealeana ATCC 700345.</title>
        <authorList>
            <consortium name="US DOE Joint Genome Institute"/>
            <person name="Copeland A."/>
            <person name="Lucas S."/>
            <person name="Lapidus A."/>
            <person name="Barry K."/>
            <person name="Glavina del Rio T."/>
            <person name="Dalin E."/>
            <person name="Tice H."/>
            <person name="Pitluck S."/>
            <person name="Chertkov O."/>
            <person name="Brettin T."/>
            <person name="Bruce D."/>
            <person name="Detter J.C."/>
            <person name="Han C."/>
            <person name="Schmutz J."/>
            <person name="Larimer F."/>
            <person name="Land M."/>
            <person name="Hauser L."/>
            <person name="Kyrpides N."/>
            <person name="Kim E."/>
            <person name="Zhao J.-S.Z."/>
            <person name="Manno D."/>
            <person name="Hawari J."/>
            <person name="Richardson P."/>
        </authorList>
    </citation>
    <scope>NUCLEOTIDE SEQUENCE [LARGE SCALE GENOMIC DNA]</scope>
    <source>
        <strain>ATCC 700345 / ANG-SQ1</strain>
    </source>
</reference>
<feature type="chain" id="PRO_1000085465" description="UPF0434 protein Spea_1772">
    <location>
        <begin position="1"/>
        <end position="57"/>
    </location>
</feature>
<proteinExistence type="inferred from homology"/>
<name>Y1772_SHEPA</name>
<accession>A8H3F8</accession>
<sequence length="57" mass="6316">MAFDKKLLEIVACPVCKGKLEFNKEAQQLICKADKLAYPINDGIPVLLENKAEPLAE</sequence>
<evidence type="ECO:0000255" key="1">
    <source>
        <dbReference type="HAMAP-Rule" id="MF_01187"/>
    </source>
</evidence>
<comment type="similarity">
    <text evidence="1">Belongs to the UPF0434 family.</text>
</comment>
<protein>
    <recommendedName>
        <fullName evidence="1">UPF0434 protein Spea_1772</fullName>
    </recommendedName>
</protein>
<dbReference type="EMBL" id="CP000851">
    <property type="protein sequence ID" value="ABV87095.1"/>
    <property type="molecule type" value="Genomic_DNA"/>
</dbReference>
<dbReference type="RefSeq" id="WP_012155015.1">
    <property type="nucleotide sequence ID" value="NC_009901.1"/>
</dbReference>
<dbReference type="SMR" id="A8H3F8"/>
<dbReference type="STRING" id="398579.Spea_1772"/>
<dbReference type="KEGG" id="spl:Spea_1772"/>
<dbReference type="eggNOG" id="COG2835">
    <property type="taxonomic scope" value="Bacteria"/>
</dbReference>
<dbReference type="HOGENOM" id="CLU_155659_3_1_6"/>
<dbReference type="OrthoDB" id="9812205at2"/>
<dbReference type="Proteomes" id="UP000002608">
    <property type="component" value="Chromosome"/>
</dbReference>
<dbReference type="GO" id="GO:0005829">
    <property type="term" value="C:cytosol"/>
    <property type="evidence" value="ECO:0007669"/>
    <property type="project" value="TreeGrafter"/>
</dbReference>
<dbReference type="FunFam" id="2.20.25.10:FF:000002">
    <property type="entry name" value="UPF0434 protein YcaR"/>
    <property type="match status" value="1"/>
</dbReference>
<dbReference type="Gene3D" id="2.20.25.10">
    <property type="match status" value="1"/>
</dbReference>
<dbReference type="HAMAP" id="MF_01187">
    <property type="entry name" value="UPF0434"/>
    <property type="match status" value="1"/>
</dbReference>
<dbReference type="InterPro" id="IPR005651">
    <property type="entry name" value="Trm112-like"/>
</dbReference>
<dbReference type="PANTHER" id="PTHR33505:SF4">
    <property type="entry name" value="PROTEIN PREY, MITOCHONDRIAL"/>
    <property type="match status" value="1"/>
</dbReference>
<dbReference type="PANTHER" id="PTHR33505">
    <property type="entry name" value="ZGC:162634"/>
    <property type="match status" value="1"/>
</dbReference>
<dbReference type="Pfam" id="PF03966">
    <property type="entry name" value="Trm112p"/>
    <property type="match status" value="1"/>
</dbReference>
<dbReference type="SUPFAM" id="SSF158997">
    <property type="entry name" value="Trm112p-like"/>
    <property type="match status" value="1"/>
</dbReference>
<keyword id="KW-1185">Reference proteome</keyword>